<name>ATPA_ANOFW</name>
<dbReference type="EC" id="7.1.2.2" evidence="1"/>
<dbReference type="EMBL" id="CP000922">
    <property type="protein sequence ID" value="ACJ35057.1"/>
    <property type="molecule type" value="Genomic_DNA"/>
</dbReference>
<dbReference type="SMR" id="B7GMF5"/>
<dbReference type="STRING" id="491915.Aflv_2704"/>
<dbReference type="KEGG" id="afl:Aflv_2704"/>
<dbReference type="eggNOG" id="COG0056">
    <property type="taxonomic scope" value="Bacteria"/>
</dbReference>
<dbReference type="HOGENOM" id="CLU_010091_2_1_9"/>
<dbReference type="Proteomes" id="UP000000742">
    <property type="component" value="Chromosome"/>
</dbReference>
<dbReference type="GO" id="GO:0005886">
    <property type="term" value="C:plasma membrane"/>
    <property type="evidence" value="ECO:0007669"/>
    <property type="project" value="UniProtKB-SubCell"/>
</dbReference>
<dbReference type="GO" id="GO:0045259">
    <property type="term" value="C:proton-transporting ATP synthase complex"/>
    <property type="evidence" value="ECO:0007669"/>
    <property type="project" value="UniProtKB-KW"/>
</dbReference>
<dbReference type="GO" id="GO:0043531">
    <property type="term" value="F:ADP binding"/>
    <property type="evidence" value="ECO:0007669"/>
    <property type="project" value="TreeGrafter"/>
</dbReference>
<dbReference type="GO" id="GO:0005524">
    <property type="term" value="F:ATP binding"/>
    <property type="evidence" value="ECO:0007669"/>
    <property type="project" value="UniProtKB-UniRule"/>
</dbReference>
<dbReference type="GO" id="GO:0046933">
    <property type="term" value="F:proton-transporting ATP synthase activity, rotational mechanism"/>
    <property type="evidence" value="ECO:0007669"/>
    <property type="project" value="UniProtKB-UniRule"/>
</dbReference>
<dbReference type="CDD" id="cd18113">
    <property type="entry name" value="ATP-synt_F1_alpha_C"/>
    <property type="match status" value="1"/>
</dbReference>
<dbReference type="CDD" id="cd18116">
    <property type="entry name" value="ATP-synt_F1_alpha_N"/>
    <property type="match status" value="1"/>
</dbReference>
<dbReference type="CDD" id="cd01132">
    <property type="entry name" value="F1-ATPase_alpha_CD"/>
    <property type="match status" value="1"/>
</dbReference>
<dbReference type="FunFam" id="1.20.150.20:FF:000001">
    <property type="entry name" value="ATP synthase subunit alpha"/>
    <property type="match status" value="1"/>
</dbReference>
<dbReference type="FunFam" id="2.40.30.20:FF:000001">
    <property type="entry name" value="ATP synthase subunit alpha"/>
    <property type="match status" value="1"/>
</dbReference>
<dbReference type="FunFam" id="3.40.50.300:FF:000002">
    <property type="entry name" value="ATP synthase subunit alpha"/>
    <property type="match status" value="1"/>
</dbReference>
<dbReference type="Gene3D" id="2.40.30.20">
    <property type="match status" value="1"/>
</dbReference>
<dbReference type="Gene3D" id="1.20.150.20">
    <property type="entry name" value="ATP synthase alpha/beta chain, C-terminal domain"/>
    <property type="match status" value="1"/>
</dbReference>
<dbReference type="Gene3D" id="3.40.50.300">
    <property type="entry name" value="P-loop containing nucleotide triphosphate hydrolases"/>
    <property type="match status" value="1"/>
</dbReference>
<dbReference type="HAMAP" id="MF_01346">
    <property type="entry name" value="ATP_synth_alpha_bact"/>
    <property type="match status" value="1"/>
</dbReference>
<dbReference type="InterPro" id="IPR023366">
    <property type="entry name" value="ATP_synth_asu-like_sf"/>
</dbReference>
<dbReference type="InterPro" id="IPR000793">
    <property type="entry name" value="ATP_synth_asu_C"/>
</dbReference>
<dbReference type="InterPro" id="IPR038376">
    <property type="entry name" value="ATP_synth_asu_C_sf"/>
</dbReference>
<dbReference type="InterPro" id="IPR033732">
    <property type="entry name" value="ATP_synth_F1_a_nt-bd_dom"/>
</dbReference>
<dbReference type="InterPro" id="IPR005294">
    <property type="entry name" value="ATP_synth_F1_asu"/>
</dbReference>
<dbReference type="InterPro" id="IPR020003">
    <property type="entry name" value="ATPase_a/bsu_AS"/>
</dbReference>
<dbReference type="InterPro" id="IPR004100">
    <property type="entry name" value="ATPase_F1/V1/A1_a/bsu_N"/>
</dbReference>
<dbReference type="InterPro" id="IPR036121">
    <property type="entry name" value="ATPase_F1/V1/A1_a/bsu_N_sf"/>
</dbReference>
<dbReference type="InterPro" id="IPR000194">
    <property type="entry name" value="ATPase_F1/V1/A1_a/bsu_nucl-bd"/>
</dbReference>
<dbReference type="InterPro" id="IPR027417">
    <property type="entry name" value="P-loop_NTPase"/>
</dbReference>
<dbReference type="NCBIfam" id="TIGR00962">
    <property type="entry name" value="atpA"/>
    <property type="match status" value="1"/>
</dbReference>
<dbReference type="NCBIfam" id="NF009884">
    <property type="entry name" value="PRK13343.1"/>
    <property type="match status" value="1"/>
</dbReference>
<dbReference type="PANTHER" id="PTHR48082">
    <property type="entry name" value="ATP SYNTHASE SUBUNIT ALPHA, MITOCHONDRIAL"/>
    <property type="match status" value="1"/>
</dbReference>
<dbReference type="PANTHER" id="PTHR48082:SF2">
    <property type="entry name" value="ATP SYNTHASE SUBUNIT ALPHA, MITOCHONDRIAL"/>
    <property type="match status" value="1"/>
</dbReference>
<dbReference type="Pfam" id="PF00006">
    <property type="entry name" value="ATP-synt_ab"/>
    <property type="match status" value="1"/>
</dbReference>
<dbReference type="Pfam" id="PF00306">
    <property type="entry name" value="ATP-synt_ab_C"/>
    <property type="match status" value="1"/>
</dbReference>
<dbReference type="Pfam" id="PF02874">
    <property type="entry name" value="ATP-synt_ab_N"/>
    <property type="match status" value="1"/>
</dbReference>
<dbReference type="PIRSF" id="PIRSF039088">
    <property type="entry name" value="F_ATPase_subunit_alpha"/>
    <property type="match status" value="1"/>
</dbReference>
<dbReference type="SUPFAM" id="SSF47917">
    <property type="entry name" value="C-terminal domain of alpha and beta subunits of F1 ATP synthase"/>
    <property type="match status" value="1"/>
</dbReference>
<dbReference type="SUPFAM" id="SSF50615">
    <property type="entry name" value="N-terminal domain of alpha and beta subunits of F1 ATP synthase"/>
    <property type="match status" value="1"/>
</dbReference>
<dbReference type="SUPFAM" id="SSF52540">
    <property type="entry name" value="P-loop containing nucleoside triphosphate hydrolases"/>
    <property type="match status" value="1"/>
</dbReference>
<dbReference type="PROSITE" id="PS00152">
    <property type="entry name" value="ATPASE_ALPHA_BETA"/>
    <property type="match status" value="1"/>
</dbReference>
<evidence type="ECO:0000255" key="1">
    <source>
        <dbReference type="HAMAP-Rule" id="MF_01346"/>
    </source>
</evidence>
<evidence type="ECO:0000256" key="2">
    <source>
        <dbReference type="SAM" id="MobiDB-lite"/>
    </source>
</evidence>
<sequence length="507" mass="55236">MKCMSIKAEEISALIKKQIENYQSEIEVSDVGTVIQVGDGIARAHGLDNVMSGELVEFANGVMGLALNLEENNVGIVILGPYTGIKEGDEVRRTGRIMEVPVGEALIGRVVNPLGQPVDGLGPIETTETRPIESPAPGVMDRKSVHEPLQTGIKAIDALVPIGRGQRELIIGDRQTGKTSVAVDTIINQKGKNMICIYVAIGQKESTVRNVVETLRKYGALDYTIVVTASASQPAPLLFLAPYAGVTMGEYFMYKGQHVLVVYDDLSKQAAAYRELSLLLRRPPGREAYPGDVFYLHSRLLERAAKLSDAKGAGSLTALPFVETQAGDISAYIPTNVISITDGQIFLQSDLFFSGVRPAINAGLSVSRVGGAAQIKAMKKVSGTLRLDLAAYRELEAFAQFGSDLDKATQAKLARGARTVEVLKQGLHEPLPVEKQVAIIYALTRGFLDDIPVEDIRRFEKEFHAWLDKDENGQKLMEHIRTTGDLPNEEDFNKAIEAFKKTFVVSE</sequence>
<reference key="1">
    <citation type="journal article" date="2008" name="Genome Biol.">
        <title>Encapsulated in silica: genome, proteome and physiology of the thermophilic bacterium Anoxybacillus flavithermus WK1.</title>
        <authorList>
            <person name="Saw J.H."/>
            <person name="Mountain B.W."/>
            <person name="Feng L."/>
            <person name="Omelchenko M.V."/>
            <person name="Hou S."/>
            <person name="Saito J.A."/>
            <person name="Stott M.B."/>
            <person name="Li D."/>
            <person name="Zhao G."/>
            <person name="Wu J."/>
            <person name="Galperin M.Y."/>
            <person name="Koonin E.V."/>
            <person name="Makarova K.S."/>
            <person name="Wolf Y.I."/>
            <person name="Rigden D.J."/>
            <person name="Dunfield P.F."/>
            <person name="Wang L."/>
            <person name="Alam M."/>
        </authorList>
    </citation>
    <scope>NUCLEOTIDE SEQUENCE [LARGE SCALE GENOMIC DNA]</scope>
    <source>
        <strain>DSM 21510 / WK1</strain>
    </source>
</reference>
<comment type="function">
    <text evidence="1">Produces ATP from ADP in the presence of a proton gradient across the membrane. The alpha chain is a regulatory subunit.</text>
</comment>
<comment type="catalytic activity">
    <reaction evidence="1">
        <text>ATP + H2O + 4 H(+)(in) = ADP + phosphate + 5 H(+)(out)</text>
        <dbReference type="Rhea" id="RHEA:57720"/>
        <dbReference type="ChEBI" id="CHEBI:15377"/>
        <dbReference type="ChEBI" id="CHEBI:15378"/>
        <dbReference type="ChEBI" id="CHEBI:30616"/>
        <dbReference type="ChEBI" id="CHEBI:43474"/>
        <dbReference type="ChEBI" id="CHEBI:456216"/>
        <dbReference type="EC" id="7.1.2.2"/>
    </reaction>
</comment>
<comment type="subunit">
    <text evidence="1">F-type ATPases have 2 components, CF(1) - the catalytic core - and CF(0) - the membrane proton channel. CF(1) has five subunits: alpha(3), beta(3), gamma(1), delta(1), epsilon(1). CF(0) has three main subunits: a(1), b(2) and c(9-12). The alpha and beta chains form an alternating ring which encloses part of the gamma chain. CF(1) is attached to CF(0) by a central stalk formed by the gamma and epsilon chains, while a peripheral stalk is formed by the delta and b chains.</text>
</comment>
<comment type="subcellular location">
    <subcellularLocation>
        <location evidence="1">Cell membrane</location>
        <topology evidence="1">Peripheral membrane protein</topology>
    </subcellularLocation>
</comment>
<comment type="similarity">
    <text evidence="1">Belongs to the ATPase alpha/beta chains family.</text>
</comment>
<keyword id="KW-0066">ATP synthesis</keyword>
<keyword id="KW-0067">ATP-binding</keyword>
<keyword id="KW-1003">Cell membrane</keyword>
<keyword id="KW-0139">CF(1)</keyword>
<keyword id="KW-0375">Hydrogen ion transport</keyword>
<keyword id="KW-0406">Ion transport</keyword>
<keyword id="KW-0472">Membrane</keyword>
<keyword id="KW-0547">Nucleotide-binding</keyword>
<keyword id="KW-1278">Translocase</keyword>
<keyword id="KW-0813">Transport</keyword>
<feature type="chain" id="PRO_1000143340" description="ATP synthase subunit alpha">
    <location>
        <begin position="1"/>
        <end position="507"/>
    </location>
</feature>
<feature type="region of interest" description="Disordered" evidence="2">
    <location>
        <begin position="118"/>
        <end position="141"/>
    </location>
</feature>
<feature type="binding site" evidence="1">
    <location>
        <begin position="172"/>
        <end position="179"/>
    </location>
    <ligand>
        <name>ATP</name>
        <dbReference type="ChEBI" id="CHEBI:30616"/>
    </ligand>
</feature>
<feature type="site" description="Required for activity" evidence="1">
    <location>
        <position position="365"/>
    </location>
</feature>
<gene>
    <name evidence="1" type="primary">atpA</name>
    <name type="ordered locus">Aflv_2704</name>
</gene>
<proteinExistence type="inferred from homology"/>
<accession>B7GMF5</accession>
<organism>
    <name type="scientific">Anoxybacillus flavithermus (strain DSM 21510 / WK1)</name>
    <dbReference type="NCBI Taxonomy" id="491915"/>
    <lineage>
        <taxon>Bacteria</taxon>
        <taxon>Bacillati</taxon>
        <taxon>Bacillota</taxon>
        <taxon>Bacilli</taxon>
        <taxon>Bacillales</taxon>
        <taxon>Anoxybacillaceae</taxon>
        <taxon>Anoxybacillus</taxon>
    </lineage>
</organism>
<protein>
    <recommendedName>
        <fullName evidence="1">ATP synthase subunit alpha</fullName>
        <ecNumber evidence="1">7.1.2.2</ecNumber>
    </recommendedName>
    <alternativeName>
        <fullName evidence="1">ATP synthase F1 sector subunit alpha</fullName>
    </alternativeName>
    <alternativeName>
        <fullName evidence="1">F-ATPase subunit alpha</fullName>
    </alternativeName>
</protein>